<evidence type="ECO:0000250" key="1"/>
<evidence type="ECO:0000255" key="2"/>
<evidence type="ECO:0000255" key="3">
    <source>
        <dbReference type="PROSITE-ProRule" id="PRU01056"/>
    </source>
</evidence>
<evidence type="ECO:0000256" key="4">
    <source>
        <dbReference type="SAM" id="MobiDB-lite"/>
    </source>
</evidence>
<evidence type="ECO:0000269" key="5">
    <source>
    </source>
</evidence>
<evidence type="ECO:0000269" key="6">
    <source>
    </source>
</evidence>
<evidence type="ECO:0000269" key="7">
    <source>
    </source>
</evidence>
<evidence type="ECO:0000269" key="8">
    <source>
    </source>
</evidence>
<evidence type="ECO:0000269" key="9">
    <source>
    </source>
</evidence>
<evidence type="ECO:0000269" key="10">
    <source>
    </source>
</evidence>
<evidence type="ECO:0000269" key="11">
    <source>
    </source>
</evidence>
<evidence type="ECO:0000269" key="12">
    <source>
    </source>
</evidence>
<evidence type="ECO:0000269" key="13">
    <source>
    </source>
</evidence>
<evidence type="ECO:0000305" key="14"/>
<evidence type="ECO:0007744" key="15">
    <source>
    </source>
</evidence>
<evidence type="ECO:0007744" key="16">
    <source>
    </source>
</evidence>
<evidence type="ECO:0007744" key="17">
    <source>
    </source>
</evidence>
<evidence type="ECO:0007744" key="18">
    <source>
    </source>
</evidence>
<evidence type="ECO:0007744" key="19">
    <source>
    </source>
</evidence>
<evidence type="ECO:0007829" key="20">
    <source>
        <dbReference type="PDB" id="8FWP"/>
    </source>
</evidence>
<evidence type="ECO:0007829" key="21">
    <source>
        <dbReference type="PDB" id="8PFH"/>
    </source>
</evidence>
<reference key="1">
    <citation type="journal article" date="1996" name="Curr. Opin. Cell Biol.">
        <title>The septins: roles in cytokinesis and other processes.</title>
        <authorList>
            <person name="Longtine M.S."/>
            <person name="DeMarini D.J."/>
            <person name="Valencik M.L."/>
            <person name="Al-Awar O.S."/>
            <person name="Fares H."/>
            <person name="De Virgilio C."/>
            <person name="Pringle J.R."/>
        </authorList>
    </citation>
    <scope>NUCLEOTIDE SEQUENCE [GENOMIC DNA]</scope>
    <source>
        <strain>ATCC 204510 / AB320</strain>
    </source>
</reference>
<reference key="2">
    <citation type="journal article" date="1997" name="Nature">
        <title>The nucleotide sequence of Saccharomyces cerevisiae chromosome XII.</title>
        <authorList>
            <person name="Johnston M."/>
            <person name="Hillier L.W."/>
            <person name="Riles L."/>
            <person name="Albermann K."/>
            <person name="Andre B."/>
            <person name="Ansorge W."/>
            <person name="Benes V."/>
            <person name="Brueckner M."/>
            <person name="Delius H."/>
            <person name="Dubois E."/>
            <person name="Duesterhoeft A."/>
            <person name="Entian K.-D."/>
            <person name="Floeth M."/>
            <person name="Goffeau A."/>
            <person name="Hebling U."/>
            <person name="Heumann K."/>
            <person name="Heuss-Neitzel D."/>
            <person name="Hilbert H."/>
            <person name="Hilger F."/>
            <person name="Kleine K."/>
            <person name="Koetter P."/>
            <person name="Louis E.J."/>
            <person name="Messenguy F."/>
            <person name="Mewes H.-W."/>
            <person name="Miosga T."/>
            <person name="Moestl D."/>
            <person name="Mueller-Auer S."/>
            <person name="Nentwich U."/>
            <person name="Obermaier B."/>
            <person name="Piravandi E."/>
            <person name="Pohl T.M."/>
            <person name="Portetelle D."/>
            <person name="Purnelle B."/>
            <person name="Rechmann S."/>
            <person name="Rieger M."/>
            <person name="Rinke M."/>
            <person name="Rose M."/>
            <person name="Scharfe M."/>
            <person name="Scherens B."/>
            <person name="Scholler P."/>
            <person name="Schwager C."/>
            <person name="Schwarz S."/>
            <person name="Underwood A.P."/>
            <person name="Urrestarazu L.A."/>
            <person name="Vandenbol M."/>
            <person name="Verhasselt P."/>
            <person name="Vierendeels F."/>
            <person name="Voet M."/>
            <person name="Volckaert G."/>
            <person name="Voss H."/>
            <person name="Wambutt R."/>
            <person name="Wedler E."/>
            <person name="Wedler H."/>
            <person name="Zimmermann F.K."/>
            <person name="Zollner A."/>
            <person name="Hani J."/>
            <person name="Hoheisel J.D."/>
        </authorList>
    </citation>
    <scope>NUCLEOTIDE SEQUENCE [LARGE SCALE GENOMIC DNA]</scope>
    <source>
        <strain>ATCC 204508 / S288c</strain>
    </source>
</reference>
<reference key="3">
    <citation type="journal article" date="2014" name="G3 (Bethesda)">
        <title>The reference genome sequence of Saccharomyces cerevisiae: Then and now.</title>
        <authorList>
            <person name="Engel S.R."/>
            <person name="Dietrich F.S."/>
            <person name="Fisk D.G."/>
            <person name="Binkley G."/>
            <person name="Balakrishnan R."/>
            <person name="Costanzo M.C."/>
            <person name="Dwight S.S."/>
            <person name="Hitz B.C."/>
            <person name="Karra K."/>
            <person name="Nash R.S."/>
            <person name="Weng S."/>
            <person name="Wong E.D."/>
            <person name="Lloyd P."/>
            <person name="Skrzypek M.S."/>
            <person name="Miyasato S.R."/>
            <person name="Simison M."/>
            <person name="Cherry J.M."/>
        </authorList>
    </citation>
    <scope>GENOME REANNOTATION</scope>
    <scope>SEQUENCE REVISION TO 431</scope>
    <source>
        <strain>ATCC 204508 / S288c</strain>
    </source>
</reference>
<reference key="4">
    <citation type="journal article" date="1998" name="J. Cell Biol.">
        <title>Polymerization of purified yeast septins: evidence that organized filament arrays may not be required for septin function.</title>
        <authorList>
            <person name="Frazier J.A."/>
            <person name="Wong M.L."/>
            <person name="Longtine M.S."/>
            <person name="Pringle J.R."/>
            <person name="Mann M."/>
            <person name="Mitchison T.J."/>
            <person name="Field C."/>
        </authorList>
    </citation>
    <scope>IDENTIFICATION IN THE SEPTIN COMPLEX</scope>
</reference>
<reference key="5">
    <citation type="journal article" date="1999" name="J. Cell Biol.">
        <title>Cell cycle-regulated attachment of the ubiquitin-related protein SUMO to the yeast septins.</title>
        <authorList>
            <person name="Johnson E.S."/>
            <person name="Blobel G."/>
        </authorList>
    </citation>
    <scope>SUMOYLATION AT LYS-4; LYS-11; LYS-30; LYS-63 AND LYS-287</scope>
    <scope>MUTAGENESIS OF LYS-4; LYS-11; LYS-287; LYS-415 AND LYS-443</scope>
    <scope>IDENTIFICATION BY MASS SPECTROMETRY</scope>
</reference>
<reference key="6">
    <citation type="journal article" date="2001" name="Gene">
        <title>A novel factor required for the SUMO1/Smt3 conjugation of yeast septins.</title>
        <authorList>
            <person name="Takahashi Y."/>
            <person name="Toh-e A."/>
            <person name="Kikuchi Y."/>
        </authorList>
    </citation>
    <scope>SUMOYLATION</scope>
    <scope>INTERACTION WITH SIZ1</scope>
</reference>
<reference key="7">
    <citation type="journal article" date="2002" name="Cell Cycle">
        <title>Phosphorylation of the septin cdc3 in G1 by the cdc28 kinase is essential for efficient septin ring disassembly.</title>
        <authorList>
            <person name="Tang C.S."/>
            <person name="Reed S.I."/>
        </authorList>
    </citation>
    <scope>PHOSPHORYLATION BY CDC28</scope>
</reference>
<reference key="8">
    <citation type="journal article" date="2002" name="Mol. Biol. Cell">
        <title>Cell cycle-dependent assembly of a Gin4-septin complex.</title>
        <authorList>
            <person name="Mortensen E.M."/>
            <person name="McDonald H."/>
            <person name="Yates J. III"/>
            <person name="Kellogg D.R."/>
        </authorList>
    </citation>
    <scope>IDENTIFICATION IN THE GIN4 COMPLEX</scope>
    <scope>IDENTIFICATION BY MASS SPECTROMETRY</scope>
</reference>
<reference key="9">
    <citation type="journal article" date="2003" name="Mol. Cell. Biol.">
        <title>Molecular dissection of a yeast septin: distinct domains are required for septin interaction, localization, and function.</title>
        <authorList>
            <person name="Casamayor A."/>
            <person name="Snyder M."/>
        </authorList>
    </citation>
    <scope>ASSOCIATION WITH PHOSPHOINOSIDES LIPIDS</scope>
    <scope>INTERACTION WITH CDC11</scope>
</reference>
<reference key="10">
    <citation type="journal article" date="2004" name="Mol. Biol. Cell">
        <title>Protein-protein interactions governing septin heteropentamer assembly and septin filament organization in Saccharomyces cerevisiae.</title>
        <authorList>
            <person name="Versele M."/>
            <person name="Gullbrand B."/>
            <person name="Shulewitz M.J."/>
            <person name="Cid V.J."/>
            <person name="Bahmanyar S."/>
            <person name="Chen R.E."/>
            <person name="Barth P."/>
            <person name="Alber T."/>
            <person name="Thorner J."/>
        </authorList>
    </citation>
    <scope>SELF-ASSOCIATION</scope>
    <scope>ASSEMBLY OF THE SEPTIN FILAMENTS</scope>
</reference>
<reference key="11">
    <citation type="journal article" date="2004" name="J. Biol. Chem.">
        <title>Global analyses of sumoylated proteins in Saccharomyces cerevisiae. Induction of protein sumoylation by cellular stresses.</title>
        <authorList>
            <person name="Zhou W."/>
            <person name="Ryan J.J."/>
            <person name="Zhou H."/>
        </authorList>
    </citation>
    <scope>SUMOYLATION [LARGE SCALE ANALYSIS] AT LYS-63</scope>
    <scope>IDENTIFICATION BY MASS SPECTROMETRY</scope>
</reference>
<reference key="12">
    <citation type="journal article" date="2005" name="Mol. Cell. Proteomics">
        <title>A proteomic strategy for gaining insights into protein sumoylation in yeast.</title>
        <authorList>
            <person name="Denison C."/>
            <person name="Rudner A.D."/>
            <person name="Gerber S.A."/>
            <person name="Bakalarski C.E."/>
            <person name="Moazed D."/>
            <person name="Gygi S.P."/>
        </authorList>
    </citation>
    <scope>SUMOYLATION [LARGE SCALE ANALYSIS] AT LYS-63</scope>
    <scope>IDENTIFICATION BY MASS SPECTROMETRY</scope>
    <source>
        <strain>EJY251-11b</strain>
    </source>
</reference>
<reference key="13">
    <citation type="journal article" date="2005" name="Mol. Cell. Proteomics">
        <title>Quantitative phosphoproteomics applied to the yeast pheromone signaling pathway.</title>
        <authorList>
            <person name="Gruhler A."/>
            <person name="Olsen J.V."/>
            <person name="Mohammed S."/>
            <person name="Mortensen P."/>
            <person name="Faergeman N.J."/>
            <person name="Mann M."/>
            <person name="Jensen O.N."/>
        </authorList>
    </citation>
    <scope>ACETYLATION [LARGE SCALE ANALYSIS] AT SER-2</scope>
    <scope>PHOSPHORYLATION [LARGE SCALE ANALYSIS] AT SER-2</scope>
    <scope>CLEAVAGE OF INITIATOR METHIONINE [LARGE SCALE ANALYSIS]</scope>
    <scope>IDENTIFICATION BY MASS SPECTROMETRY [LARGE SCALE ANALYSIS]</scope>
    <source>
        <strain>YAL6B</strain>
    </source>
</reference>
<reference key="14">
    <citation type="journal article" date="2007" name="J. Proteome Res.">
        <title>Large-scale phosphorylation analysis of alpha-factor-arrested Saccharomyces cerevisiae.</title>
        <authorList>
            <person name="Li X."/>
            <person name="Gerber S.A."/>
            <person name="Rudner A.D."/>
            <person name="Beausoleil S.A."/>
            <person name="Haas W."/>
            <person name="Villen J."/>
            <person name="Elias J.E."/>
            <person name="Gygi S.P."/>
        </authorList>
    </citation>
    <scope>IDENTIFICATION BY MASS SPECTROMETRY [LARGE SCALE ANALYSIS]</scope>
    <source>
        <strain>ADR376</strain>
    </source>
</reference>
<reference key="15">
    <citation type="journal article" date="2007" name="Proc. Natl. Acad. Sci. U.S.A.">
        <title>Analysis of phosphorylation sites on proteins from Saccharomyces cerevisiae by electron transfer dissociation (ETD) mass spectrometry.</title>
        <authorList>
            <person name="Chi A."/>
            <person name="Huttenhower C."/>
            <person name="Geer L.Y."/>
            <person name="Coon J.J."/>
            <person name="Syka J.E.P."/>
            <person name="Bai D.L."/>
            <person name="Shabanowitz J."/>
            <person name="Burke D.J."/>
            <person name="Troyanskaya O.G."/>
            <person name="Hunt D.F."/>
        </authorList>
    </citation>
    <scope>PHOSPHORYLATION [LARGE SCALE ANALYSIS] AT SER-9</scope>
    <scope>IDENTIFICATION BY MASS SPECTROMETRY [LARGE SCALE ANALYSIS]</scope>
</reference>
<reference key="16">
    <citation type="journal article" date="2008" name="Genetics">
        <title>A novel septin-associated protein, Syp1p, is required for normal cell cycle-dependent septin cytoskeleton dynamics in yeast.</title>
        <authorList>
            <person name="Qiu W."/>
            <person name="Neo S.P."/>
            <person name="Yu X."/>
            <person name="Cai M."/>
        </authorList>
    </citation>
    <scope>INTERACTION WITH SYP1</scope>
</reference>
<reference key="17">
    <citation type="journal article" date="2008" name="Mol. Cell. Proteomics">
        <title>A multidimensional chromatography technology for in-depth phosphoproteome analysis.</title>
        <authorList>
            <person name="Albuquerque C.P."/>
            <person name="Smolka M.B."/>
            <person name="Payne S.H."/>
            <person name="Bafna V."/>
            <person name="Eng J."/>
            <person name="Zhou H."/>
        </authorList>
    </citation>
    <scope>PHOSPHORYLATION [LARGE SCALE ANALYSIS] AT SER-9; SER-175 AND THR-468</scope>
    <scope>IDENTIFICATION BY MASS SPECTROMETRY [LARGE SCALE ANALYSIS]</scope>
</reference>
<reference key="18">
    <citation type="journal article" date="2009" name="Science">
        <title>Global analysis of Cdk1 substrate phosphorylation sites provides insights into evolution.</title>
        <authorList>
            <person name="Holt L.J."/>
            <person name="Tuch B.B."/>
            <person name="Villen J."/>
            <person name="Johnson A.D."/>
            <person name="Gygi S.P."/>
            <person name="Morgan D.O."/>
        </authorList>
    </citation>
    <scope>PHOSPHORYLATION [LARGE SCALE ANALYSIS] AT THR-47; SER-60; SER-77; SER-175 AND SER-509</scope>
    <scope>IDENTIFICATION BY MASS SPECTROMETRY [LARGE SCALE ANALYSIS]</scope>
</reference>
<reference key="19">
    <citation type="journal article" date="2012" name="Proc. Natl. Acad. Sci. U.S.A.">
        <title>N-terminal acetylome analyses and functional insights of the N-terminal acetyltransferase NatB.</title>
        <authorList>
            <person name="Van Damme P."/>
            <person name="Lasa M."/>
            <person name="Polevoda B."/>
            <person name="Gazquez C."/>
            <person name="Elosegui-Artola A."/>
            <person name="Kim D.S."/>
            <person name="De Juan-Pardo E."/>
            <person name="Demeyer K."/>
            <person name="Hole K."/>
            <person name="Larrea E."/>
            <person name="Timmerman E."/>
            <person name="Prieto J."/>
            <person name="Arnesen T."/>
            <person name="Sherman F."/>
            <person name="Gevaert K."/>
            <person name="Aldabe R."/>
        </authorList>
    </citation>
    <scope>ACETYLATION [LARGE SCALE ANALYSIS] AT SER-2</scope>
    <scope>CLEAVAGE OF INITIATOR METHIONINE [LARGE SCALE ANALYSIS]</scope>
    <scope>IDENTIFICATION BY MASS SPECTROMETRY [LARGE SCALE ANALYSIS]</scope>
</reference>
<keyword id="KW-0002">3D-structure</keyword>
<keyword id="KW-0007">Acetylation</keyword>
<keyword id="KW-0131">Cell cycle</keyword>
<keyword id="KW-0132">Cell division</keyword>
<keyword id="KW-0175">Coiled coil</keyword>
<keyword id="KW-0342">GTP-binding</keyword>
<keyword id="KW-1017">Isopeptide bond</keyword>
<keyword id="KW-0472">Membrane</keyword>
<keyword id="KW-0547">Nucleotide-binding</keyword>
<keyword id="KW-0597">Phosphoprotein</keyword>
<keyword id="KW-1185">Reference proteome</keyword>
<keyword id="KW-0832">Ubl conjugation</keyword>
<accession>P32457</accession>
<accession>D6VYV8</accession>
<accession>Q06161</accession>
<name>CDC3_YEAST</name>
<organism>
    <name type="scientific">Saccharomyces cerevisiae (strain ATCC 204508 / S288c)</name>
    <name type="common">Baker's yeast</name>
    <dbReference type="NCBI Taxonomy" id="559292"/>
    <lineage>
        <taxon>Eukaryota</taxon>
        <taxon>Fungi</taxon>
        <taxon>Dikarya</taxon>
        <taxon>Ascomycota</taxon>
        <taxon>Saccharomycotina</taxon>
        <taxon>Saccharomycetes</taxon>
        <taxon>Saccharomycetales</taxon>
        <taxon>Saccharomycetaceae</taxon>
        <taxon>Saccharomyces</taxon>
    </lineage>
</organism>
<sequence length="520" mass="60054">MSLKEEQVSIKQDPEQEERQHDQFNDVQIKQESQDHDGVDSQYTNGTQNDDSERFEAAESDVKVEPGLGMGITSSQSEKGQVLPDQPEIKFIRRQINGYVGFANLPKQWHRRSIKNGFSFNLLCVGPDGIGKTTLMKTLFNNDDIEANLVKDYEEELANDQEEEEGQGEGHENQSQEQRHKVKIKSYESVIEENGVKLNLNVIDTEGFGDFLNNDQKSWDPIIKEIDSRFDQYLDAENKINRHSINDKRIHACLYFIEPTGHYLKPLDLKFMQSVYEKCNLIPVIAKSDILTDEEILSFKKTIMNQLIQSNIELFKPPIYSNDDAENSHLSERLFSSLPYAVIGSNDIVENYSGNQVRGRSYPWGVIEVDNDNHSDFNLLKNLLIKQFMEELKERTSKILYENYRSSKLAKLGIKQDNSVFKEFDPISKQQEEKTLHEAKLAKLEIEMKTVFQQKVSEKEKKLQKSETELFARHKEMKEKLTKQLKALEDKKKQLELSINSASPNVNHSPVPTKKKGFLR</sequence>
<feature type="initiator methionine" description="Removed" evidence="15 19">
    <location>
        <position position="1"/>
    </location>
</feature>
<feature type="chain" id="PRO_0000173496" description="Cell division control protein 3">
    <location>
        <begin position="2"/>
        <end position="520"/>
    </location>
</feature>
<feature type="domain" description="Septin-type G" evidence="3">
    <location>
        <begin position="116"/>
        <end position="411"/>
    </location>
</feature>
<feature type="region of interest" description="Disordered" evidence="4">
    <location>
        <begin position="1"/>
        <end position="83"/>
    </location>
</feature>
<feature type="region of interest" description="G1 motif" evidence="3">
    <location>
        <begin position="126"/>
        <end position="133"/>
    </location>
</feature>
<feature type="region of interest" description="Disordered" evidence="4">
    <location>
        <begin position="156"/>
        <end position="181"/>
    </location>
</feature>
<feature type="region of interest" description="G3 motif" evidence="3">
    <location>
        <begin position="204"/>
        <end position="207"/>
    </location>
</feature>
<feature type="region of interest" description="G4 motif" evidence="3">
    <location>
        <begin position="286"/>
        <end position="289"/>
    </location>
</feature>
<feature type="region of interest" description="Disordered" evidence="4">
    <location>
        <begin position="496"/>
        <end position="520"/>
    </location>
</feature>
<feature type="coiled-coil region" evidence="2">
    <location>
        <begin position="427"/>
        <end position="508"/>
    </location>
</feature>
<feature type="compositionally biased region" description="Basic and acidic residues" evidence="4">
    <location>
        <begin position="1"/>
        <end position="24"/>
    </location>
</feature>
<feature type="compositionally biased region" description="Basic and acidic residues" evidence="4">
    <location>
        <begin position="51"/>
        <end position="64"/>
    </location>
</feature>
<feature type="compositionally biased region" description="Acidic residues" evidence="4">
    <location>
        <begin position="156"/>
        <end position="167"/>
    </location>
</feature>
<feature type="compositionally biased region" description="Basic and acidic residues" evidence="4">
    <location>
        <begin position="168"/>
        <end position="179"/>
    </location>
</feature>
<feature type="compositionally biased region" description="Polar residues" evidence="4">
    <location>
        <begin position="497"/>
        <end position="510"/>
    </location>
</feature>
<feature type="binding site" evidence="1">
    <location>
        <begin position="126"/>
        <end position="133"/>
    </location>
    <ligand>
        <name>GTP</name>
        <dbReference type="ChEBI" id="CHEBI:37565"/>
    </ligand>
</feature>
<feature type="binding site" evidence="1">
    <location>
        <position position="207"/>
    </location>
    <ligand>
        <name>GTP</name>
        <dbReference type="ChEBI" id="CHEBI:37565"/>
    </ligand>
</feature>
<feature type="binding site" evidence="1">
    <location>
        <begin position="287"/>
        <end position="295"/>
    </location>
    <ligand>
        <name>GTP</name>
        <dbReference type="ChEBI" id="CHEBI:37565"/>
    </ligand>
</feature>
<feature type="binding site" evidence="1">
    <location>
        <position position="344"/>
    </location>
    <ligand>
        <name>GTP</name>
        <dbReference type="ChEBI" id="CHEBI:37565"/>
    </ligand>
</feature>
<feature type="binding site" evidence="1">
    <location>
        <position position="360"/>
    </location>
    <ligand>
        <name>GTP</name>
        <dbReference type="ChEBI" id="CHEBI:37565"/>
    </ligand>
</feature>
<feature type="site" description="Not sumoylated">
    <location>
        <position position="415"/>
    </location>
</feature>
<feature type="site" description="Not sumoylated">
    <location>
        <position position="443"/>
    </location>
</feature>
<feature type="modified residue" description="N-acetylserine" evidence="15 19">
    <location>
        <position position="2"/>
    </location>
</feature>
<feature type="modified residue" description="Phosphoserine" evidence="15">
    <location>
        <position position="2"/>
    </location>
</feature>
<feature type="modified residue" description="Phosphoserine" evidence="16 17">
    <location>
        <position position="9"/>
    </location>
</feature>
<feature type="modified residue" description="Phosphothreonine" evidence="18">
    <location>
        <position position="47"/>
    </location>
</feature>
<feature type="modified residue" description="Phosphoserine" evidence="18">
    <location>
        <position position="60"/>
    </location>
</feature>
<feature type="modified residue" description="Phosphoserine" evidence="18">
    <location>
        <position position="77"/>
    </location>
</feature>
<feature type="modified residue" description="Phosphoserine" evidence="17 18">
    <location>
        <position position="175"/>
    </location>
</feature>
<feature type="modified residue" description="Phosphothreonine" evidence="17">
    <location>
        <position position="468"/>
    </location>
</feature>
<feature type="modified residue" description="Phosphoserine" evidence="18">
    <location>
        <position position="509"/>
    </location>
</feature>
<feature type="cross-link" description="Glycyl lysine isopeptide (Lys-Gly) (interchain with G-Cter in SUMO)">
    <location>
        <position position="4"/>
    </location>
</feature>
<feature type="cross-link" description="Glycyl lysine isopeptide (Lys-Gly) (interchain with G-Cter in SUMO)">
    <location>
        <position position="11"/>
    </location>
</feature>
<feature type="cross-link" description="Glycyl lysine isopeptide (Lys-Gly) (interchain with G-Cter in SUMO)">
    <location>
        <position position="30"/>
    </location>
</feature>
<feature type="cross-link" description="Glycyl lysine isopeptide (Lys-Gly) (interchain with G-Cter in SUMO)" evidence="10 11">
    <location>
        <position position="63"/>
    </location>
</feature>
<feature type="cross-link" description="Glycyl lysine isopeptide (Lys-Gly) (interchain with G-Cter in SUMO)">
    <location>
        <position position="287"/>
    </location>
</feature>
<feature type="mutagenesis site" description="Abolishes sumoylation." evidence="5">
    <original>K</original>
    <variation>R</variation>
    <location>
        <position position="4"/>
    </location>
</feature>
<feature type="mutagenesis site" description="Abolishes sumoylation." evidence="5">
    <original>K</original>
    <variation>R</variation>
    <location>
        <position position="11"/>
    </location>
</feature>
<feature type="mutagenesis site" description="Abolishes sumoylation." evidence="5">
    <original>K</original>
    <variation>R</variation>
    <location>
        <position position="287"/>
    </location>
</feature>
<feature type="mutagenesis site" description="No effect on sumoylation." evidence="5">
    <original>K</original>
    <variation>R</variation>
    <location>
        <position position="415"/>
    </location>
</feature>
<feature type="mutagenesis site" description="No effect on sumoylation." evidence="5">
    <original>K</original>
    <variation>R</variation>
    <location>
        <position position="443"/>
    </location>
</feature>
<feature type="sequence conflict" description="In Ref. 2; AAB64515." evidence="14" ref="2">
    <original>Q</original>
    <variation>L</variation>
    <location>
        <position position="431"/>
    </location>
</feature>
<feature type="helix" evidence="21">
    <location>
        <begin position="105"/>
        <end position="116"/>
    </location>
</feature>
<feature type="strand" evidence="20">
    <location>
        <begin position="119"/>
        <end position="125"/>
    </location>
</feature>
<feature type="helix" evidence="20">
    <location>
        <begin position="132"/>
        <end position="139"/>
    </location>
</feature>
<feature type="turn" evidence="20">
    <location>
        <begin position="143"/>
        <end position="146"/>
    </location>
</feature>
<feature type="strand" evidence="20">
    <location>
        <begin position="183"/>
        <end position="193"/>
    </location>
</feature>
<feature type="strand" evidence="20">
    <location>
        <begin position="196"/>
        <end position="207"/>
    </location>
</feature>
<feature type="turn" evidence="21">
    <location>
        <begin position="208"/>
        <end position="210"/>
    </location>
</feature>
<feature type="strand" evidence="20">
    <location>
        <begin position="211"/>
        <end position="213"/>
    </location>
</feature>
<feature type="helix" evidence="20">
    <location>
        <begin position="216"/>
        <end position="238"/>
    </location>
</feature>
<feature type="strand" evidence="20">
    <location>
        <begin position="252"/>
        <end position="257"/>
    </location>
</feature>
<feature type="helix" evidence="20">
    <location>
        <begin position="266"/>
        <end position="275"/>
    </location>
</feature>
<feature type="turn" evidence="20">
    <location>
        <begin position="276"/>
        <end position="278"/>
    </location>
</feature>
<feature type="strand" evidence="20">
    <location>
        <begin position="281"/>
        <end position="285"/>
    </location>
</feature>
<feature type="helix" evidence="20">
    <location>
        <begin position="288"/>
        <end position="290"/>
    </location>
</feature>
<feature type="helix" evidence="20">
    <location>
        <begin position="293"/>
        <end position="309"/>
    </location>
</feature>
<feature type="helix" evidence="20">
    <location>
        <begin position="335"/>
        <end position="337"/>
    </location>
</feature>
<feature type="strand" evidence="20">
    <location>
        <begin position="339"/>
        <end position="341"/>
    </location>
</feature>
<feature type="strand" evidence="20">
    <location>
        <begin position="347"/>
        <end position="350"/>
    </location>
</feature>
<feature type="strand" evidence="20">
    <location>
        <begin position="356"/>
        <end position="362"/>
    </location>
</feature>
<feature type="strand" evidence="20">
    <location>
        <begin position="365"/>
        <end position="368"/>
    </location>
</feature>
<feature type="turn" evidence="20">
    <location>
        <begin position="372"/>
        <end position="374"/>
    </location>
</feature>
<feature type="helix" evidence="20">
    <location>
        <begin position="377"/>
        <end position="384"/>
    </location>
</feature>
<feature type="turn" evidence="21">
    <location>
        <begin position="385"/>
        <end position="388"/>
    </location>
</feature>
<feature type="helix" evidence="20">
    <location>
        <begin position="389"/>
        <end position="398"/>
    </location>
</feature>
<feature type="helix" evidence="20">
    <location>
        <begin position="400"/>
        <end position="408"/>
    </location>
</feature>
<dbReference type="EMBL" id="L16548">
    <property type="protein sequence ID" value="AAB50034.1"/>
    <property type="molecule type" value="Genomic_DNA"/>
</dbReference>
<dbReference type="EMBL" id="U20618">
    <property type="protein sequence ID" value="AAB64515.1"/>
    <property type="molecule type" value="Genomic_DNA"/>
</dbReference>
<dbReference type="EMBL" id="BK006945">
    <property type="protein sequence ID" value="DAA09624.2"/>
    <property type="molecule type" value="Genomic_DNA"/>
</dbReference>
<dbReference type="PIR" id="S53393">
    <property type="entry name" value="S53393"/>
</dbReference>
<dbReference type="RefSeq" id="NP_013418.2">
    <property type="nucleotide sequence ID" value="NM_001182203.2"/>
</dbReference>
<dbReference type="PDB" id="8FWP">
    <property type="method" value="X-ray"/>
    <property type="resolution" value="2.22 A"/>
    <property type="chains" value="B=119-411"/>
</dbReference>
<dbReference type="PDB" id="8PFH">
    <property type="method" value="X-ray"/>
    <property type="resolution" value="3.24 A"/>
    <property type="chains" value="B=81-410"/>
</dbReference>
<dbReference type="PDB" id="8SGD">
    <property type="method" value="X-ray"/>
    <property type="resolution" value="2.66 A"/>
    <property type="chains" value="B/D=119-413"/>
</dbReference>
<dbReference type="PDB" id="9GD4">
    <property type="method" value="X-ray"/>
    <property type="resolution" value="2.04 A"/>
    <property type="chains" value="B=81-410"/>
</dbReference>
<dbReference type="PDBsum" id="8FWP"/>
<dbReference type="PDBsum" id="8PFH"/>
<dbReference type="PDBsum" id="8SGD"/>
<dbReference type="PDBsum" id="9GD4"/>
<dbReference type="SMR" id="P32457"/>
<dbReference type="BioGRID" id="31579">
    <property type="interactions" value="795"/>
</dbReference>
<dbReference type="ComplexPortal" id="CPX-1675">
    <property type="entry name" value="Septin complex"/>
</dbReference>
<dbReference type="ComplexPortal" id="CPX-1712">
    <property type="entry name" value="Gin4 serine/threonine kinase complex"/>
</dbReference>
<dbReference type="DIP" id="DIP-3010N"/>
<dbReference type="ELM" id="P32457"/>
<dbReference type="FunCoup" id="P32457">
    <property type="interactions" value="647"/>
</dbReference>
<dbReference type="IntAct" id="P32457">
    <property type="interactions" value="38"/>
</dbReference>
<dbReference type="MINT" id="P32457"/>
<dbReference type="STRING" id="4932.YLR314C"/>
<dbReference type="iPTMnet" id="P32457"/>
<dbReference type="PaxDb" id="4932-YLR314C"/>
<dbReference type="PeptideAtlas" id="P32457"/>
<dbReference type="EnsemblFungi" id="YLR314C_mRNA">
    <property type="protein sequence ID" value="YLR314C"/>
    <property type="gene ID" value="YLR314C"/>
</dbReference>
<dbReference type="GeneID" id="851024"/>
<dbReference type="KEGG" id="sce:YLR314C"/>
<dbReference type="AGR" id="SGD:S000004306"/>
<dbReference type="SGD" id="S000004306">
    <property type="gene designation" value="CDC3"/>
</dbReference>
<dbReference type="VEuPathDB" id="FungiDB:YLR314C"/>
<dbReference type="eggNOG" id="KOG2655">
    <property type="taxonomic scope" value="Eukaryota"/>
</dbReference>
<dbReference type="GeneTree" id="ENSGT00940000154222"/>
<dbReference type="HOGENOM" id="CLU_017718_8_0_1"/>
<dbReference type="InParanoid" id="P32457"/>
<dbReference type="OMA" id="RSNPMGS"/>
<dbReference type="OrthoDB" id="416553at2759"/>
<dbReference type="BioCyc" id="YEAST:G3O-32400-MONOMER"/>
<dbReference type="BioGRID-ORCS" id="851024">
    <property type="hits" value="10 hits in 10 CRISPR screens"/>
</dbReference>
<dbReference type="PRO" id="PR:P32457"/>
<dbReference type="Proteomes" id="UP000002311">
    <property type="component" value="Chromosome XII"/>
</dbReference>
<dbReference type="RNAct" id="P32457">
    <property type="molecule type" value="protein"/>
</dbReference>
<dbReference type="GO" id="GO:0005619">
    <property type="term" value="C:ascospore wall"/>
    <property type="evidence" value="ECO:0000314"/>
    <property type="project" value="SGD"/>
</dbReference>
<dbReference type="GO" id="GO:0032153">
    <property type="term" value="C:cell division site"/>
    <property type="evidence" value="ECO:0000318"/>
    <property type="project" value="GO_Central"/>
</dbReference>
<dbReference type="GO" id="GO:0005935">
    <property type="term" value="C:cellular bud neck"/>
    <property type="evidence" value="ECO:0007005"/>
    <property type="project" value="SGD"/>
</dbReference>
<dbReference type="GO" id="GO:0000144">
    <property type="term" value="C:cellular bud neck septin ring"/>
    <property type="evidence" value="ECO:0000314"/>
    <property type="project" value="SGD"/>
</dbReference>
<dbReference type="GO" id="GO:1990317">
    <property type="term" value="C:Gin4 complex"/>
    <property type="evidence" value="ECO:0000353"/>
    <property type="project" value="ComplexPortal"/>
</dbReference>
<dbReference type="GO" id="GO:0001400">
    <property type="term" value="C:mating projection base"/>
    <property type="evidence" value="ECO:0000314"/>
    <property type="project" value="SGD"/>
</dbReference>
<dbReference type="GO" id="GO:0015630">
    <property type="term" value="C:microtubule cytoskeleton"/>
    <property type="evidence" value="ECO:0000318"/>
    <property type="project" value="GO_Central"/>
</dbReference>
<dbReference type="GO" id="GO:0005628">
    <property type="term" value="C:prospore membrane"/>
    <property type="evidence" value="ECO:0000314"/>
    <property type="project" value="SGD"/>
</dbReference>
<dbReference type="GO" id="GO:0031105">
    <property type="term" value="C:septin complex"/>
    <property type="evidence" value="ECO:0000314"/>
    <property type="project" value="SGD"/>
</dbReference>
<dbReference type="GO" id="GO:0032160">
    <property type="term" value="C:septin filament array"/>
    <property type="evidence" value="ECO:0000314"/>
    <property type="project" value="SGD"/>
</dbReference>
<dbReference type="GO" id="GO:0005940">
    <property type="term" value="C:septin ring"/>
    <property type="evidence" value="ECO:0000318"/>
    <property type="project" value="GO_Central"/>
</dbReference>
<dbReference type="GO" id="GO:0005525">
    <property type="term" value="F:GTP binding"/>
    <property type="evidence" value="ECO:0000314"/>
    <property type="project" value="SGD"/>
</dbReference>
<dbReference type="GO" id="GO:0003924">
    <property type="term" value="F:GTPase activity"/>
    <property type="evidence" value="ECO:0000318"/>
    <property type="project" value="GO_Central"/>
</dbReference>
<dbReference type="GO" id="GO:0060090">
    <property type="term" value="F:molecular adaptor activity"/>
    <property type="evidence" value="ECO:0000318"/>
    <property type="project" value="GO_Central"/>
</dbReference>
<dbReference type="GO" id="GO:0070273">
    <property type="term" value="F:phosphatidylinositol-4-phosphate binding"/>
    <property type="evidence" value="ECO:0000314"/>
    <property type="project" value="SGD"/>
</dbReference>
<dbReference type="GO" id="GO:0010314">
    <property type="term" value="F:phosphatidylinositol-5-phosphate binding"/>
    <property type="evidence" value="ECO:0000314"/>
    <property type="project" value="SGD"/>
</dbReference>
<dbReference type="GO" id="GO:0005200">
    <property type="term" value="F:structural constituent of cytoskeleton"/>
    <property type="evidence" value="ECO:0000314"/>
    <property type="project" value="SGD"/>
</dbReference>
<dbReference type="GO" id="GO:0032186">
    <property type="term" value="P:cellular bud neck septin ring organization"/>
    <property type="evidence" value="ECO:0000303"/>
    <property type="project" value="ComplexPortal"/>
</dbReference>
<dbReference type="GO" id="GO:0061640">
    <property type="term" value="P:cytoskeleton-dependent cytokinesis"/>
    <property type="evidence" value="ECO:0000318"/>
    <property type="project" value="GO_Central"/>
</dbReference>
<dbReference type="GO" id="GO:0000281">
    <property type="term" value="P:mitotic cytokinesis"/>
    <property type="evidence" value="ECO:0000314"/>
    <property type="project" value="SGD"/>
</dbReference>
<dbReference type="GO" id="GO:0008104">
    <property type="term" value="P:protein localization"/>
    <property type="evidence" value="ECO:0000318"/>
    <property type="project" value="GO_Central"/>
</dbReference>
<dbReference type="GO" id="GO:0000921">
    <property type="term" value="P:septin ring assembly"/>
    <property type="evidence" value="ECO:0000315"/>
    <property type="project" value="SGD"/>
</dbReference>
<dbReference type="GO" id="GO:0031107">
    <property type="term" value="P:septin ring disassembly"/>
    <property type="evidence" value="ECO:0000315"/>
    <property type="project" value="SGD"/>
</dbReference>
<dbReference type="GO" id="GO:0000920">
    <property type="term" value="P:septum digestion after cytokinesis"/>
    <property type="evidence" value="ECO:0000303"/>
    <property type="project" value="ComplexPortal"/>
</dbReference>
<dbReference type="CDD" id="cd01850">
    <property type="entry name" value="CDC_Septin"/>
    <property type="match status" value="1"/>
</dbReference>
<dbReference type="FunFam" id="3.40.50.300:FF:000162">
    <property type="entry name" value="septin-7 isoform X1"/>
    <property type="match status" value="1"/>
</dbReference>
<dbReference type="Gene3D" id="3.40.50.300">
    <property type="entry name" value="P-loop containing nucleotide triphosphate hydrolases"/>
    <property type="match status" value="1"/>
</dbReference>
<dbReference type="InterPro" id="IPR030379">
    <property type="entry name" value="G_SEPTIN_dom"/>
</dbReference>
<dbReference type="InterPro" id="IPR027417">
    <property type="entry name" value="P-loop_NTPase"/>
</dbReference>
<dbReference type="InterPro" id="IPR016491">
    <property type="entry name" value="Septin"/>
</dbReference>
<dbReference type="PANTHER" id="PTHR18884">
    <property type="entry name" value="SEPTIN"/>
    <property type="match status" value="1"/>
</dbReference>
<dbReference type="Pfam" id="PF00735">
    <property type="entry name" value="Septin"/>
    <property type="match status" value="1"/>
</dbReference>
<dbReference type="PIRSF" id="PIRSF006698">
    <property type="entry name" value="Septin"/>
    <property type="match status" value="1"/>
</dbReference>
<dbReference type="SUPFAM" id="SSF52540">
    <property type="entry name" value="P-loop containing nucleoside triphosphate hydrolases"/>
    <property type="match status" value="1"/>
</dbReference>
<dbReference type="PROSITE" id="PS51719">
    <property type="entry name" value="G_SEPTIN"/>
    <property type="match status" value="1"/>
</dbReference>
<gene>
    <name type="primary">CDC3</name>
    <name type="ordered locus">YLR314C</name>
    <name type="ORF">L8543.7</name>
</gene>
<comment type="function">
    <text>Septins are GTPases involved in cytokinesis that assemble early in the cell cycle as a patch at the incipient bud site and form a ring approximate 15 minutes before bud emergence, which transforms into an hour-glass shaped collar of cortical filaments that spans both sides of the mother-bud neck. This collar persists until just before cytokinesis, when it splits into two rings that occupy opposite sides of the neck. The septins at the bud neck serve as a structural scaffold that recruits different components involved in diverse processes at specific stages during the cell cycle. Many proteins bind asymmetrically to the septin collar. The septin assembly is regulated by protein kinases GIN4 and/or CLA4. May act by recruiting MYO1 and HOF1, a protein involved in septation, to the site of cleavage. Septins are also involved in cell morphogenesis, bud site selection, chitin deposition, cell cycle regulation, cell compartmentalization and spore wall formation.</text>
</comment>
<comment type="subunit">
    <text evidence="6 7 9 12 13">Component of the septin complex which consists of CDC3, CDC10, CDC11, CDC12 and probably SHS1 and rearranges to a cortical collar of highly ordered filaments at the mother-bud-neck. A complex formed by CDC3, CDC10, CDC11 and CDC12 is capable of forming long filaments in vitro and the components seem to be present in a 2:2:2:2 arrangement in vivo. The filaments are proposed to be formed by the end-to-end polymerization of CDC3-CDC12-CDC11 complexes with CDC10 serving as a bridge to bundle the polymers into paired filaments. Component of the GIN4 complex composed of at least BNI5, CDC3, CDC10, CDC11, CDC12, GIN4, NAP1 and SHS1. Self-associates. Interacts with SIZ1 and SYP1.</text>
</comment>
<comment type="interaction">
    <interactant intactId="EBI-4429">
        <id>P32457</id>
    </interactant>
    <interactant intactId="EBI-28997">
        <id>P53890</id>
        <label>BNI5</label>
    </interactant>
    <organismsDiffer>false</organismsDiffer>
    <experiments>2</experiments>
</comment>
<comment type="interaction">
    <interactant intactId="EBI-4429">
        <id>P32457</id>
    </interactant>
    <interactant intactId="EBI-4174">
        <id>P25342</id>
        <label>CDC10</label>
    </interactant>
    <organismsDiffer>false</organismsDiffer>
    <experiments>12</experiments>
</comment>
<comment type="interaction">
    <interactant intactId="EBI-4429">
        <id>P32457</id>
    </interactant>
    <interactant intactId="EBI-7575">
        <id>P38785</id>
        <label>GIC1</label>
    </interactant>
    <organismsDiffer>false</organismsDiffer>
    <experiments>2</experiments>
</comment>
<comment type="interaction">
    <interactant intactId="EBI-4429">
        <id>P32457</id>
    </interactant>
    <interactant intactId="EBI-7585">
        <id>Q06648</id>
        <label>GIC2</label>
    </interactant>
    <organismsDiffer>false</organismsDiffer>
    <experiments>3</experiments>
</comment>
<comment type="subcellular location">
    <subcellularLocation>
        <location>Membrane</location>
        <topology>Peripheral membrane protein</topology>
    </subcellularLocation>
    <subcellularLocation>
        <location>Bud neck</location>
    </subcellularLocation>
    <text>Present at the bud neck during cell division. Probably interacts with phosphoinosides such as phosphatidylinositol 4-phosphate or phosphatidylinositol 5-phosphate.</text>
</comment>
<comment type="PTM">
    <text evidence="8">Phosphorylated by CDC28. Phosphorylation at the end of G1 may facilitate initiation of a new cell cycle by promoting disassembly of the obsolete septin ring from the previous cell cycle.</text>
</comment>
<comment type="PTM">
    <text evidence="5 6 10 11">Sumoylated during mitosis on the mother cell side of the bud neck by UBC9/SIZ1. Sumoylation probably plays a central role in regulating septin ring disassembly during the cell cycle.</text>
</comment>
<comment type="similarity">
    <text evidence="3">Belongs to the TRAFAC class TrmE-Era-EngA-EngB-Septin-like GTPase superfamily. Septin GTPase family.</text>
</comment>
<protein>
    <recommendedName>
        <fullName>Cell division control protein 3</fullName>
    </recommendedName>
</protein>
<proteinExistence type="evidence at protein level"/>